<name>PYRH_RICBR</name>
<sequence length="239" mass="26330">MTSNLKYKRVLLKVSGEALMGDKQFGHDYDTIKKIAGDIKELIDSGVEVAIVVGGGNIYRGINAALVGMDRASADYIGMLATVINALTLQNVMESLNIYTRVLSAIPMMSVCEPYIRRRAKRHMEKGRVVIFAGGTGNPFCTTDSAAVLRAIEMNCDVLLKATQVDGVYDSDPKKNPNAKKYFTINYKDVITNNLQVMDLATIAIARENKLPIRVFSIKEQGNIAKVVQDQGEYTTIEE</sequence>
<protein>
    <recommendedName>
        <fullName evidence="1">Uridylate kinase</fullName>
        <shortName evidence="1">UK</shortName>
        <ecNumber evidence="1">2.7.4.22</ecNumber>
    </recommendedName>
    <alternativeName>
        <fullName evidence="1">Uridine monophosphate kinase</fullName>
        <shortName evidence="1">UMP kinase</shortName>
        <shortName evidence="1">UMPK</shortName>
    </alternativeName>
</protein>
<proteinExistence type="inferred from homology"/>
<organism>
    <name type="scientific">Rickettsia bellii (strain RML369-C)</name>
    <dbReference type="NCBI Taxonomy" id="336407"/>
    <lineage>
        <taxon>Bacteria</taxon>
        <taxon>Pseudomonadati</taxon>
        <taxon>Pseudomonadota</taxon>
        <taxon>Alphaproteobacteria</taxon>
        <taxon>Rickettsiales</taxon>
        <taxon>Rickettsiaceae</taxon>
        <taxon>Rickettsieae</taxon>
        <taxon>Rickettsia</taxon>
        <taxon>belli group</taxon>
    </lineage>
</organism>
<accession>Q1RHF2</accession>
<gene>
    <name evidence="1" type="primary">pyrH</name>
    <name type="ordered locus">RBE_1131</name>
</gene>
<evidence type="ECO:0000255" key="1">
    <source>
        <dbReference type="HAMAP-Rule" id="MF_01220"/>
    </source>
</evidence>
<keyword id="KW-0067">ATP-binding</keyword>
<keyword id="KW-0963">Cytoplasm</keyword>
<keyword id="KW-0418">Kinase</keyword>
<keyword id="KW-0547">Nucleotide-binding</keyword>
<keyword id="KW-0665">Pyrimidine biosynthesis</keyword>
<keyword id="KW-0808">Transferase</keyword>
<comment type="function">
    <text evidence="1">Catalyzes the reversible phosphorylation of UMP to UDP.</text>
</comment>
<comment type="catalytic activity">
    <reaction evidence="1">
        <text>UMP + ATP = UDP + ADP</text>
        <dbReference type="Rhea" id="RHEA:24400"/>
        <dbReference type="ChEBI" id="CHEBI:30616"/>
        <dbReference type="ChEBI" id="CHEBI:57865"/>
        <dbReference type="ChEBI" id="CHEBI:58223"/>
        <dbReference type="ChEBI" id="CHEBI:456216"/>
        <dbReference type="EC" id="2.7.4.22"/>
    </reaction>
</comment>
<comment type="activity regulation">
    <text evidence="1">Inhibited by UTP.</text>
</comment>
<comment type="pathway">
    <text evidence="1">Pyrimidine metabolism; CTP biosynthesis via de novo pathway; UDP from UMP (UMPK route): step 1/1.</text>
</comment>
<comment type="subunit">
    <text evidence="1">Homohexamer.</text>
</comment>
<comment type="subcellular location">
    <subcellularLocation>
        <location evidence="1">Cytoplasm</location>
    </subcellularLocation>
</comment>
<comment type="similarity">
    <text evidence="1">Belongs to the UMP kinase family.</text>
</comment>
<reference key="1">
    <citation type="journal article" date="2006" name="PLoS Genet.">
        <title>Genome sequence of Rickettsia bellii illuminates the role of amoebae in gene exchanges between intracellular pathogens.</title>
        <authorList>
            <person name="Ogata H."/>
            <person name="La Scola B."/>
            <person name="Audic S."/>
            <person name="Renesto P."/>
            <person name="Blanc G."/>
            <person name="Robert C."/>
            <person name="Fournier P.-E."/>
            <person name="Claverie J.-M."/>
            <person name="Raoult D."/>
        </authorList>
    </citation>
    <scope>NUCLEOTIDE SEQUENCE [LARGE SCALE GENOMIC DNA]</scope>
    <source>
        <strain>RML369-C</strain>
    </source>
</reference>
<feature type="chain" id="PRO_0000272398" description="Uridylate kinase">
    <location>
        <begin position="1"/>
        <end position="239"/>
    </location>
</feature>
<feature type="binding site" evidence="1">
    <location>
        <begin position="13"/>
        <end position="16"/>
    </location>
    <ligand>
        <name>ATP</name>
        <dbReference type="ChEBI" id="CHEBI:30616"/>
    </ligand>
</feature>
<feature type="binding site" evidence="1">
    <location>
        <position position="55"/>
    </location>
    <ligand>
        <name>UMP</name>
        <dbReference type="ChEBI" id="CHEBI:57865"/>
    </ligand>
</feature>
<feature type="binding site" evidence="1">
    <location>
        <position position="56"/>
    </location>
    <ligand>
        <name>ATP</name>
        <dbReference type="ChEBI" id="CHEBI:30616"/>
    </ligand>
</feature>
<feature type="binding site" evidence="1">
    <location>
        <position position="60"/>
    </location>
    <ligand>
        <name>ATP</name>
        <dbReference type="ChEBI" id="CHEBI:30616"/>
    </ligand>
</feature>
<feature type="binding site" evidence="1">
    <location>
        <position position="75"/>
    </location>
    <ligand>
        <name>UMP</name>
        <dbReference type="ChEBI" id="CHEBI:57865"/>
    </ligand>
</feature>
<feature type="binding site" evidence="1">
    <location>
        <begin position="136"/>
        <end position="143"/>
    </location>
    <ligand>
        <name>UMP</name>
        <dbReference type="ChEBI" id="CHEBI:57865"/>
    </ligand>
</feature>
<feature type="binding site" evidence="1">
    <location>
        <position position="163"/>
    </location>
    <ligand>
        <name>ATP</name>
        <dbReference type="ChEBI" id="CHEBI:30616"/>
    </ligand>
</feature>
<feature type="binding site" evidence="1">
    <location>
        <position position="164"/>
    </location>
    <ligand>
        <name>ATP</name>
        <dbReference type="ChEBI" id="CHEBI:30616"/>
    </ligand>
</feature>
<feature type="binding site" evidence="1">
    <location>
        <position position="169"/>
    </location>
    <ligand>
        <name>ATP</name>
        <dbReference type="ChEBI" id="CHEBI:30616"/>
    </ligand>
</feature>
<feature type="binding site" evidence="1">
    <location>
        <position position="172"/>
    </location>
    <ligand>
        <name>ATP</name>
        <dbReference type="ChEBI" id="CHEBI:30616"/>
    </ligand>
</feature>
<dbReference type="EC" id="2.7.4.22" evidence="1"/>
<dbReference type="EMBL" id="CP000087">
    <property type="protein sequence ID" value="ABE05212.1"/>
    <property type="molecule type" value="Genomic_DNA"/>
</dbReference>
<dbReference type="RefSeq" id="WP_011477790.1">
    <property type="nucleotide sequence ID" value="NC_007940.1"/>
</dbReference>
<dbReference type="SMR" id="Q1RHF2"/>
<dbReference type="KEGG" id="rbe:RBE_1131"/>
<dbReference type="eggNOG" id="COG0528">
    <property type="taxonomic scope" value="Bacteria"/>
</dbReference>
<dbReference type="HOGENOM" id="CLU_033861_0_0_5"/>
<dbReference type="OrthoDB" id="9807458at2"/>
<dbReference type="UniPathway" id="UPA00159">
    <property type="reaction ID" value="UER00275"/>
</dbReference>
<dbReference type="Proteomes" id="UP000001951">
    <property type="component" value="Chromosome"/>
</dbReference>
<dbReference type="GO" id="GO:0005737">
    <property type="term" value="C:cytoplasm"/>
    <property type="evidence" value="ECO:0007669"/>
    <property type="project" value="UniProtKB-SubCell"/>
</dbReference>
<dbReference type="GO" id="GO:0005524">
    <property type="term" value="F:ATP binding"/>
    <property type="evidence" value="ECO:0007669"/>
    <property type="project" value="UniProtKB-KW"/>
</dbReference>
<dbReference type="GO" id="GO:0033862">
    <property type="term" value="F:UMP kinase activity"/>
    <property type="evidence" value="ECO:0007669"/>
    <property type="project" value="UniProtKB-EC"/>
</dbReference>
<dbReference type="GO" id="GO:0044210">
    <property type="term" value="P:'de novo' CTP biosynthetic process"/>
    <property type="evidence" value="ECO:0007669"/>
    <property type="project" value="UniProtKB-UniRule"/>
</dbReference>
<dbReference type="GO" id="GO:0006225">
    <property type="term" value="P:UDP biosynthetic process"/>
    <property type="evidence" value="ECO:0007669"/>
    <property type="project" value="TreeGrafter"/>
</dbReference>
<dbReference type="CDD" id="cd04254">
    <property type="entry name" value="AAK_UMPK-PyrH-Ec"/>
    <property type="match status" value="1"/>
</dbReference>
<dbReference type="FunFam" id="3.40.1160.10:FF:000001">
    <property type="entry name" value="Uridylate kinase"/>
    <property type="match status" value="1"/>
</dbReference>
<dbReference type="Gene3D" id="3.40.1160.10">
    <property type="entry name" value="Acetylglutamate kinase-like"/>
    <property type="match status" value="1"/>
</dbReference>
<dbReference type="HAMAP" id="MF_01220_B">
    <property type="entry name" value="PyrH_B"/>
    <property type="match status" value="1"/>
</dbReference>
<dbReference type="InterPro" id="IPR036393">
    <property type="entry name" value="AceGlu_kinase-like_sf"/>
</dbReference>
<dbReference type="InterPro" id="IPR001048">
    <property type="entry name" value="Asp/Glu/Uridylate_kinase"/>
</dbReference>
<dbReference type="InterPro" id="IPR011817">
    <property type="entry name" value="Uridylate_kinase"/>
</dbReference>
<dbReference type="InterPro" id="IPR015963">
    <property type="entry name" value="Uridylate_kinase_bac"/>
</dbReference>
<dbReference type="NCBIfam" id="TIGR02075">
    <property type="entry name" value="pyrH_bact"/>
    <property type="match status" value="1"/>
</dbReference>
<dbReference type="PANTHER" id="PTHR42833">
    <property type="entry name" value="URIDYLATE KINASE"/>
    <property type="match status" value="1"/>
</dbReference>
<dbReference type="PANTHER" id="PTHR42833:SF4">
    <property type="entry name" value="URIDYLATE KINASE PUMPKIN, CHLOROPLASTIC"/>
    <property type="match status" value="1"/>
</dbReference>
<dbReference type="Pfam" id="PF00696">
    <property type="entry name" value="AA_kinase"/>
    <property type="match status" value="1"/>
</dbReference>
<dbReference type="PIRSF" id="PIRSF005650">
    <property type="entry name" value="Uridylate_kin"/>
    <property type="match status" value="1"/>
</dbReference>
<dbReference type="SUPFAM" id="SSF53633">
    <property type="entry name" value="Carbamate kinase-like"/>
    <property type="match status" value="1"/>
</dbReference>